<protein>
    <recommendedName>
        <fullName>DNA replication complex GINS protein PSF3</fullName>
    </recommendedName>
</protein>
<comment type="function">
    <text evidence="1">The GINS complex plays an essential role in the initiation of DNA replication.</text>
</comment>
<comment type="subunit">
    <text evidence="1">Component of the GINS complex which is a heterotetramer of SLD5, PSF1, PSF2 and PSF3.</text>
</comment>
<comment type="subcellular location">
    <subcellularLocation>
        <location evidence="1">Nucleus</location>
    </subcellularLocation>
</comment>
<comment type="similarity">
    <text evidence="2">Belongs to the GINS3/PSF3 family.</text>
</comment>
<name>PSF3_CRYNB</name>
<gene>
    <name type="primary">PSF3</name>
    <name type="ordered locus">CNBJ2330</name>
</gene>
<dbReference type="EMBL" id="AAEY01000050">
    <property type="protein sequence ID" value="EAL18310.1"/>
    <property type="molecule type" value="Genomic_DNA"/>
</dbReference>
<dbReference type="RefSeq" id="XP_772957.1">
    <property type="nucleotide sequence ID" value="XM_767864.1"/>
</dbReference>
<dbReference type="SMR" id="P0CQ33"/>
<dbReference type="EnsemblFungi" id="ALO60904">
    <property type="protein sequence ID" value="ALO60904"/>
    <property type="gene ID" value="CNJ01135"/>
</dbReference>
<dbReference type="GeneID" id="4938576"/>
<dbReference type="KEGG" id="cnb:CNBJ2330"/>
<dbReference type="VEuPathDB" id="FungiDB:CNBJ2330"/>
<dbReference type="HOGENOM" id="CLU_081646_0_1_1"/>
<dbReference type="OrthoDB" id="1950at5206"/>
<dbReference type="GO" id="GO:0000811">
    <property type="term" value="C:GINS complex"/>
    <property type="evidence" value="ECO:0007669"/>
    <property type="project" value="TreeGrafter"/>
</dbReference>
<dbReference type="GO" id="GO:1902975">
    <property type="term" value="P:mitotic DNA replication initiation"/>
    <property type="evidence" value="ECO:0007669"/>
    <property type="project" value="TreeGrafter"/>
</dbReference>
<dbReference type="CDD" id="cd11713">
    <property type="entry name" value="GINS_A_psf3"/>
    <property type="match status" value="1"/>
</dbReference>
<dbReference type="CDD" id="cd21693">
    <property type="entry name" value="GINS_B_Psf3"/>
    <property type="match status" value="1"/>
</dbReference>
<dbReference type="Gene3D" id="1.20.58.2050">
    <property type="match status" value="1"/>
</dbReference>
<dbReference type="InterPro" id="IPR021151">
    <property type="entry name" value="GINS_A"/>
</dbReference>
<dbReference type="InterPro" id="IPR036224">
    <property type="entry name" value="GINS_bundle-like_dom_sf"/>
</dbReference>
<dbReference type="InterPro" id="IPR010492">
    <property type="entry name" value="GINS_Psf3"/>
</dbReference>
<dbReference type="InterPro" id="IPR038437">
    <property type="entry name" value="GINS_Psf3_sf"/>
</dbReference>
<dbReference type="InterPro" id="IPR055221">
    <property type="entry name" value="PSF3_N"/>
</dbReference>
<dbReference type="PANTHER" id="PTHR22768">
    <property type="entry name" value="DNA REPLICATION COMPLEX GINS PROTEIN PSF3"/>
    <property type="match status" value="1"/>
</dbReference>
<dbReference type="PANTHER" id="PTHR22768:SF0">
    <property type="entry name" value="DNA REPLICATION COMPLEX GINS PROTEIN PSF3"/>
    <property type="match status" value="1"/>
</dbReference>
<dbReference type="Pfam" id="PF22466">
    <property type="entry name" value="PSF3_N"/>
    <property type="match status" value="1"/>
</dbReference>
<dbReference type="Pfam" id="PF05916">
    <property type="entry name" value="Sld5"/>
    <property type="match status" value="1"/>
</dbReference>
<dbReference type="SUPFAM" id="SSF158573">
    <property type="entry name" value="GINS helical bundle-like"/>
    <property type="match status" value="1"/>
</dbReference>
<dbReference type="SUPFAM" id="SSF160059">
    <property type="entry name" value="PriA/YqbF domain"/>
    <property type="match status" value="1"/>
</dbReference>
<feature type="chain" id="PRO_0000410226" description="DNA replication complex GINS protein PSF3">
    <location>
        <begin position="1"/>
        <end position="189"/>
    </location>
</feature>
<keyword id="KW-0235">DNA replication</keyword>
<keyword id="KW-0539">Nucleus</keyword>
<reference key="1">
    <citation type="journal article" date="2005" name="Science">
        <title>The genome of the basidiomycetous yeast and human pathogen Cryptococcus neoformans.</title>
        <authorList>
            <person name="Loftus B.J."/>
            <person name="Fung E."/>
            <person name="Roncaglia P."/>
            <person name="Rowley D."/>
            <person name="Amedeo P."/>
            <person name="Bruno D."/>
            <person name="Vamathevan J."/>
            <person name="Miranda M."/>
            <person name="Anderson I.J."/>
            <person name="Fraser J.A."/>
            <person name="Allen J.E."/>
            <person name="Bosdet I.E."/>
            <person name="Brent M.R."/>
            <person name="Chiu R."/>
            <person name="Doering T.L."/>
            <person name="Donlin M.J."/>
            <person name="D'Souza C.A."/>
            <person name="Fox D.S."/>
            <person name="Grinberg V."/>
            <person name="Fu J."/>
            <person name="Fukushima M."/>
            <person name="Haas B.J."/>
            <person name="Huang J.C."/>
            <person name="Janbon G."/>
            <person name="Jones S.J.M."/>
            <person name="Koo H.L."/>
            <person name="Krzywinski M.I."/>
            <person name="Kwon-Chung K.J."/>
            <person name="Lengeler K.B."/>
            <person name="Maiti R."/>
            <person name="Marra M.A."/>
            <person name="Marra R.E."/>
            <person name="Mathewson C.A."/>
            <person name="Mitchell T.G."/>
            <person name="Pertea M."/>
            <person name="Riggs F.R."/>
            <person name="Salzberg S.L."/>
            <person name="Schein J.E."/>
            <person name="Shvartsbeyn A."/>
            <person name="Shin H."/>
            <person name="Shumway M."/>
            <person name="Specht C.A."/>
            <person name="Suh B.B."/>
            <person name="Tenney A."/>
            <person name="Utterback T.R."/>
            <person name="Wickes B.L."/>
            <person name="Wortman J.R."/>
            <person name="Wye N.H."/>
            <person name="Kronstad J.W."/>
            <person name="Lodge J.K."/>
            <person name="Heitman J."/>
            <person name="Davis R.W."/>
            <person name="Fraser C.M."/>
            <person name="Hyman R.W."/>
        </authorList>
    </citation>
    <scope>NUCLEOTIDE SEQUENCE [LARGE SCALE GENOMIC DNA]</scope>
    <source>
        <strain>B-3501A</strain>
    </source>
</reference>
<proteinExistence type="inferred from homology"/>
<accession>P0CQ33</accession>
<accession>Q55KV0</accession>
<accession>Q5KAM9</accession>
<evidence type="ECO:0000250" key="1"/>
<evidence type="ECO:0000305" key="2"/>
<sequence>MEDDYFSITSILADNHKMSCTFALDAEGLGYLEGSTENDIHEGTKVELPFWLAQTLSVNQFTTFTLPLPYSSRVQSALVASPVSVKLSNLVGGNGWWYRWGKKLADMLEDEQATNIRNMLLRAFTGRLPTLQDLAAHHASADHTMPELSTSKAEMFRDGMEGDERELFSIGQDSGRLFKAWYDRKKGSR</sequence>
<organism>
    <name type="scientific">Cryptococcus neoformans var. neoformans serotype D (strain B-3501A)</name>
    <name type="common">Filobasidiella neoformans</name>
    <dbReference type="NCBI Taxonomy" id="283643"/>
    <lineage>
        <taxon>Eukaryota</taxon>
        <taxon>Fungi</taxon>
        <taxon>Dikarya</taxon>
        <taxon>Basidiomycota</taxon>
        <taxon>Agaricomycotina</taxon>
        <taxon>Tremellomycetes</taxon>
        <taxon>Tremellales</taxon>
        <taxon>Cryptococcaceae</taxon>
        <taxon>Cryptococcus</taxon>
        <taxon>Cryptococcus neoformans species complex</taxon>
    </lineage>
</organism>